<protein>
    <recommendedName>
        <fullName evidence="1">NADH-quinone oxidoreductase subunit D</fullName>
        <ecNumber evidence="1">7.1.1.-</ecNumber>
    </recommendedName>
    <alternativeName>
        <fullName evidence="1">NADH dehydrogenase I subunit D</fullName>
    </alternativeName>
    <alternativeName>
        <fullName evidence="1">NDH-1 subunit D</fullName>
    </alternativeName>
</protein>
<keyword id="KW-1003">Cell membrane</keyword>
<keyword id="KW-0472">Membrane</keyword>
<keyword id="KW-0520">NAD</keyword>
<keyword id="KW-0874">Quinone</keyword>
<keyword id="KW-1185">Reference proteome</keyword>
<keyword id="KW-1278">Translocase</keyword>
<keyword id="KW-0813">Transport</keyword>
<accession>A0LRI4</accession>
<gene>
    <name evidence="1" type="primary">nuoD</name>
    <name type="ordered locus">Acel_0270</name>
</gene>
<organism>
    <name type="scientific">Acidothermus cellulolyticus (strain ATCC 43068 / DSM 8971 / 11B)</name>
    <dbReference type="NCBI Taxonomy" id="351607"/>
    <lineage>
        <taxon>Bacteria</taxon>
        <taxon>Bacillati</taxon>
        <taxon>Actinomycetota</taxon>
        <taxon>Actinomycetes</taxon>
        <taxon>Acidothermales</taxon>
        <taxon>Acidothermaceae</taxon>
        <taxon>Acidothermus</taxon>
    </lineage>
</organism>
<reference key="1">
    <citation type="journal article" date="2009" name="Genome Res.">
        <title>Complete genome of the cellulolytic thermophile Acidothermus cellulolyticus 11B provides insights into its ecophysiological and evolutionary adaptations.</title>
        <authorList>
            <person name="Barabote R.D."/>
            <person name="Xie G."/>
            <person name="Leu D.H."/>
            <person name="Normand P."/>
            <person name="Necsulea A."/>
            <person name="Daubin V."/>
            <person name="Medigue C."/>
            <person name="Adney W.S."/>
            <person name="Xu X.C."/>
            <person name="Lapidus A."/>
            <person name="Parales R.E."/>
            <person name="Detter C."/>
            <person name="Pujic P."/>
            <person name="Bruce D."/>
            <person name="Lavire C."/>
            <person name="Challacombe J.F."/>
            <person name="Brettin T.S."/>
            <person name="Berry A.M."/>
        </authorList>
    </citation>
    <scope>NUCLEOTIDE SEQUENCE [LARGE SCALE GENOMIC DNA]</scope>
    <source>
        <strain>ATCC 43068 / DSM 8971 / 11B</strain>
    </source>
</reference>
<evidence type="ECO:0000255" key="1">
    <source>
        <dbReference type="HAMAP-Rule" id="MF_01358"/>
    </source>
</evidence>
<proteinExistence type="inferred from homology"/>
<dbReference type="EC" id="7.1.1.-" evidence="1"/>
<dbReference type="EMBL" id="CP000481">
    <property type="protein sequence ID" value="ABK52044.1"/>
    <property type="molecule type" value="Genomic_DNA"/>
</dbReference>
<dbReference type="RefSeq" id="WP_011719107.1">
    <property type="nucleotide sequence ID" value="NC_008578.1"/>
</dbReference>
<dbReference type="SMR" id="A0LRI4"/>
<dbReference type="FunCoup" id="A0LRI4">
    <property type="interactions" value="224"/>
</dbReference>
<dbReference type="STRING" id="351607.Acel_0270"/>
<dbReference type="KEGG" id="ace:Acel_0270"/>
<dbReference type="eggNOG" id="COG0649">
    <property type="taxonomic scope" value="Bacteria"/>
</dbReference>
<dbReference type="HOGENOM" id="CLU_015134_1_2_11"/>
<dbReference type="InParanoid" id="A0LRI4"/>
<dbReference type="OrthoDB" id="9801496at2"/>
<dbReference type="Proteomes" id="UP000008221">
    <property type="component" value="Chromosome"/>
</dbReference>
<dbReference type="GO" id="GO:0005886">
    <property type="term" value="C:plasma membrane"/>
    <property type="evidence" value="ECO:0007669"/>
    <property type="project" value="UniProtKB-SubCell"/>
</dbReference>
<dbReference type="GO" id="GO:0051287">
    <property type="term" value="F:NAD binding"/>
    <property type="evidence" value="ECO:0007669"/>
    <property type="project" value="InterPro"/>
</dbReference>
<dbReference type="GO" id="GO:0050136">
    <property type="term" value="F:NADH:ubiquinone reductase (non-electrogenic) activity"/>
    <property type="evidence" value="ECO:0007669"/>
    <property type="project" value="UniProtKB-UniRule"/>
</dbReference>
<dbReference type="GO" id="GO:0048038">
    <property type="term" value="F:quinone binding"/>
    <property type="evidence" value="ECO:0007669"/>
    <property type="project" value="UniProtKB-KW"/>
</dbReference>
<dbReference type="Gene3D" id="1.10.645.10">
    <property type="entry name" value="Cytochrome-c3 Hydrogenase, chain B"/>
    <property type="match status" value="1"/>
</dbReference>
<dbReference type="HAMAP" id="MF_01358">
    <property type="entry name" value="NDH1_NuoD"/>
    <property type="match status" value="1"/>
</dbReference>
<dbReference type="InterPro" id="IPR001135">
    <property type="entry name" value="NADH_Q_OxRdtase_suD"/>
</dbReference>
<dbReference type="InterPro" id="IPR014029">
    <property type="entry name" value="NADH_UbQ_OxRdtase_49kDa_CS"/>
</dbReference>
<dbReference type="InterPro" id="IPR022885">
    <property type="entry name" value="NDH1_su_D/H"/>
</dbReference>
<dbReference type="InterPro" id="IPR029014">
    <property type="entry name" value="NiFe-Hase_large"/>
</dbReference>
<dbReference type="NCBIfam" id="TIGR01962">
    <property type="entry name" value="NuoD"/>
    <property type="match status" value="1"/>
</dbReference>
<dbReference type="NCBIfam" id="NF004739">
    <property type="entry name" value="PRK06075.1"/>
    <property type="match status" value="1"/>
</dbReference>
<dbReference type="PANTHER" id="PTHR11993:SF10">
    <property type="entry name" value="NADH DEHYDROGENASE [UBIQUINONE] IRON-SULFUR PROTEIN 2, MITOCHONDRIAL"/>
    <property type="match status" value="1"/>
</dbReference>
<dbReference type="PANTHER" id="PTHR11993">
    <property type="entry name" value="NADH-UBIQUINONE OXIDOREDUCTASE 49 KDA SUBUNIT"/>
    <property type="match status" value="1"/>
</dbReference>
<dbReference type="Pfam" id="PF00346">
    <property type="entry name" value="Complex1_49kDa"/>
    <property type="match status" value="1"/>
</dbReference>
<dbReference type="SUPFAM" id="SSF56762">
    <property type="entry name" value="HydB/Nqo4-like"/>
    <property type="match status" value="1"/>
</dbReference>
<dbReference type="PROSITE" id="PS00535">
    <property type="entry name" value="COMPLEX1_49K"/>
    <property type="match status" value="1"/>
</dbReference>
<sequence>MTTTDPFDVLDPTAPVYTVTGGDWQDIVSDIADRHPDRIVVNMGPQHPSTHGVLRLVLELEGETVTQARVVVGYLHTGIEKNCEYRTYTQAVTFLTRADYLSPLFTETAYCLAVEKLLGITDQIPERANVIRVMMMELNRIASHLVWLATGGMEIGALSAMLYGFREREMILDIFEMITGLRMNHAYIRPGGVIQDLPPGAVEKIREFLDIMPARIDEYHDLLTGQPIWVRRLKGVGYLDLTGAVALGATGPIMRAAGYPWDLRKVAPYCGYETYDFEVPTQTDGDCFARYLVRMDEMRESLKIIEQCLDRLRPGPVMVEDKKIAWPAKLALGPDGMGNSLDHIRHIMATSMEALIHHFKLVTEGFHVPPGQVYVPVESPRGELGVHLVSDGGTKPYRVHLREPSFVNLQTVAAVCEGGMVADVIAAVASIDPVMGGCDR</sequence>
<feature type="chain" id="PRO_0000357750" description="NADH-quinone oxidoreductase subunit D">
    <location>
        <begin position="1"/>
        <end position="440"/>
    </location>
</feature>
<name>NUOD_ACIC1</name>
<comment type="function">
    <text evidence="1">NDH-1 shuttles electrons from NADH, via FMN and iron-sulfur (Fe-S) centers, to quinones in the respiratory chain. The immediate electron acceptor for the enzyme in this species is believed to be a menaquinone. Couples the redox reaction to proton translocation (for every two electrons transferred, four hydrogen ions are translocated across the cytoplasmic membrane), and thus conserves the redox energy in a proton gradient.</text>
</comment>
<comment type="catalytic activity">
    <reaction evidence="1">
        <text>a quinone + NADH + 5 H(+)(in) = a quinol + NAD(+) + 4 H(+)(out)</text>
        <dbReference type="Rhea" id="RHEA:57888"/>
        <dbReference type="ChEBI" id="CHEBI:15378"/>
        <dbReference type="ChEBI" id="CHEBI:24646"/>
        <dbReference type="ChEBI" id="CHEBI:57540"/>
        <dbReference type="ChEBI" id="CHEBI:57945"/>
        <dbReference type="ChEBI" id="CHEBI:132124"/>
    </reaction>
</comment>
<comment type="subunit">
    <text evidence="1">NDH-1 is composed of 14 different subunits. Subunits NuoB, C, D, E, F, and G constitute the peripheral sector of the complex.</text>
</comment>
<comment type="subcellular location">
    <subcellularLocation>
        <location evidence="1">Cell membrane</location>
        <topology evidence="1">Peripheral membrane protein</topology>
        <orientation evidence="1">Cytoplasmic side</orientation>
    </subcellularLocation>
</comment>
<comment type="similarity">
    <text evidence="1">Belongs to the complex I 49 kDa subunit family.</text>
</comment>